<sequence>MEGPSSSSVPTASDAPSKYLLPSDSDDGIATSSAANVGARNHVTNTEKMEKEKKPSPMVLNVDPDYDYDEEDGGSCEEDQRGPPAPISREIVDGAIARRSRDRQISPGVKMSIGNYDDMEDDDEEAETPEEQKQRFLASMKRIRNQPQEAFDPPEDTEAMREFINRQVNDAMMFNRDNHIDYSPVNKPKEAKIIEGYLWGGIIGTGSYGKVKEVIDIYTITRRAAKIMKYEKLRKIPNGWDNIRSEMSILRRLNHRNIVKLIEVFNLPEKGKVYMIFEYCIGSVQNLIDMEPAHRLSIGESHAIFLELCHGLNYLHSKRVSHKDIKPGNLLLSIDMTVKICDFGVAEQICLFQSDGRCTKVNGTPKFQPPECVYGNHEYFDGYKVDMWSAGVTLYNMVSGKYPFEQQVLLRLYESIGTNPVEMPTNVELSKDLQDIIKRLLDKDFNTRPNISDVMQHPWFQTGFPEDQGLGRIMERMRTGDRPFTMYPSLQAMYDGAGSEVILDEDGNELVLPPPDLVKRGLKFFLELKILENLPGTLSLSSFPGFQTLEKRPGDGPPPSSDSGVVAAPDSASGDPLRRPSSRSMPTSAPPRPPSGAVEVVEAVAAPEAVVEDPVVEEAPAQQQEAPDRRRRGKRSLFSCIFRSRTDSS</sequence>
<gene>
    <name evidence="8" type="primary">par-4</name>
    <name type="ORF">CBG05647</name>
</gene>
<dbReference type="EC" id="2.7.11.1"/>
<dbReference type="EMBL" id="HE601419">
    <property type="protein sequence ID" value="CAP26084.2"/>
    <property type="molecule type" value="Genomic_DNA"/>
</dbReference>
<dbReference type="SMR" id="A8X0C4"/>
<dbReference type="FunCoup" id="A8X0C4">
    <property type="interactions" value="720"/>
</dbReference>
<dbReference type="STRING" id="6238.A8X0C4"/>
<dbReference type="WormBase" id="CBG05647">
    <property type="protein sequence ID" value="CBP15405"/>
    <property type="gene ID" value="WBGene00028053"/>
    <property type="gene designation" value="Cbr-par-4"/>
</dbReference>
<dbReference type="eggNOG" id="KOG0583">
    <property type="taxonomic scope" value="Eukaryota"/>
</dbReference>
<dbReference type="HOGENOM" id="CLU_030910_0_0_1"/>
<dbReference type="InParanoid" id="A8X0C4"/>
<dbReference type="OMA" id="GYKADMW"/>
<dbReference type="Proteomes" id="UP000008549">
    <property type="component" value="Unassembled WGS sequence"/>
</dbReference>
<dbReference type="GO" id="GO:0005938">
    <property type="term" value="C:cell cortex"/>
    <property type="evidence" value="ECO:0007669"/>
    <property type="project" value="UniProtKB-SubCell"/>
</dbReference>
<dbReference type="GO" id="GO:0005813">
    <property type="term" value="C:centrosome"/>
    <property type="evidence" value="ECO:0000318"/>
    <property type="project" value="GO_Central"/>
</dbReference>
<dbReference type="GO" id="GO:0005737">
    <property type="term" value="C:cytoplasm"/>
    <property type="evidence" value="ECO:0000318"/>
    <property type="project" value="GO_Central"/>
</dbReference>
<dbReference type="GO" id="GO:0000776">
    <property type="term" value="C:kinetochore"/>
    <property type="evidence" value="ECO:0000318"/>
    <property type="project" value="GO_Central"/>
</dbReference>
<dbReference type="GO" id="GO:0005634">
    <property type="term" value="C:nucleus"/>
    <property type="evidence" value="ECO:0000318"/>
    <property type="project" value="GO_Central"/>
</dbReference>
<dbReference type="GO" id="GO:0000922">
    <property type="term" value="C:spindle pole"/>
    <property type="evidence" value="ECO:0000318"/>
    <property type="project" value="GO_Central"/>
</dbReference>
<dbReference type="GO" id="GO:0005524">
    <property type="term" value="F:ATP binding"/>
    <property type="evidence" value="ECO:0007669"/>
    <property type="project" value="UniProtKB-KW"/>
</dbReference>
<dbReference type="GO" id="GO:0046872">
    <property type="term" value="F:metal ion binding"/>
    <property type="evidence" value="ECO:0007669"/>
    <property type="project" value="UniProtKB-KW"/>
</dbReference>
<dbReference type="GO" id="GO:0030295">
    <property type="term" value="F:protein kinase activator activity"/>
    <property type="evidence" value="ECO:0007669"/>
    <property type="project" value="InterPro"/>
</dbReference>
<dbReference type="GO" id="GO:0106310">
    <property type="term" value="F:protein serine kinase activity"/>
    <property type="evidence" value="ECO:0007669"/>
    <property type="project" value="RHEA"/>
</dbReference>
<dbReference type="GO" id="GO:0004674">
    <property type="term" value="F:protein serine/threonine kinase activity"/>
    <property type="evidence" value="ECO:0000318"/>
    <property type="project" value="GO_Central"/>
</dbReference>
<dbReference type="GO" id="GO:0030010">
    <property type="term" value="P:establishment of cell polarity"/>
    <property type="evidence" value="ECO:0007669"/>
    <property type="project" value="InterPro"/>
</dbReference>
<dbReference type="GO" id="GO:0042593">
    <property type="term" value="P:glucose homeostasis"/>
    <property type="evidence" value="ECO:0007669"/>
    <property type="project" value="InterPro"/>
</dbReference>
<dbReference type="GO" id="GO:0007052">
    <property type="term" value="P:mitotic spindle organization"/>
    <property type="evidence" value="ECO:0000318"/>
    <property type="project" value="GO_Central"/>
</dbReference>
<dbReference type="GO" id="GO:0001558">
    <property type="term" value="P:regulation of cell growth"/>
    <property type="evidence" value="ECO:0007669"/>
    <property type="project" value="InterPro"/>
</dbReference>
<dbReference type="CDD" id="cd14119">
    <property type="entry name" value="STKc_LKB1"/>
    <property type="match status" value="1"/>
</dbReference>
<dbReference type="FunFam" id="1.10.510.10:FF:001234">
    <property type="entry name" value="Serine/threonine-protein kinase par-4"/>
    <property type="match status" value="1"/>
</dbReference>
<dbReference type="FunFam" id="3.30.200.20:FF:001122">
    <property type="entry name" value="Serine/threonine-protein kinase par-4"/>
    <property type="match status" value="1"/>
</dbReference>
<dbReference type="Gene3D" id="3.30.200.20">
    <property type="entry name" value="Phosphorylase Kinase, domain 1"/>
    <property type="match status" value="1"/>
</dbReference>
<dbReference type="Gene3D" id="1.10.510.10">
    <property type="entry name" value="Transferase(Phosphotransferase) domain 1"/>
    <property type="match status" value="1"/>
</dbReference>
<dbReference type="InterPro" id="IPR011009">
    <property type="entry name" value="Kinase-like_dom_sf"/>
</dbReference>
<dbReference type="InterPro" id="IPR039154">
    <property type="entry name" value="LKB1_c"/>
</dbReference>
<dbReference type="InterPro" id="IPR000719">
    <property type="entry name" value="Prot_kinase_dom"/>
</dbReference>
<dbReference type="InterPro" id="IPR017441">
    <property type="entry name" value="Protein_kinase_ATP_BS"/>
</dbReference>
<dbReference type="InterPro" id="IPR008271">
    <property type="entry name" value="Ser/Thr_kinase_AS"/>
</dbReference>
<dbReference type="PANTHER" id="PTHR24346">
    <property type="entry name" value="MAP/MICROTUBULE AFFINITY-REGULATING KINASE"/>
    <property type="match status" value="1"/>
</dbReference>
<dbReference type="PANTHER" id="PTHR24346:SF94">
    <property type="entry name" value="NON-SPECIFIC SERINE_THREONINE PROTEIN KINASE"/>
    <property type="match status" value="1"/>
</dbReference>
<dbReference type="Pfam" id="PF00069">
    <property type="entry name" value="Pkinase"/>
    <property type="match status" value="1"/>
</dbReference>
<dbReference type="SMART" id="SM00220">
    <property type="entry name" value="S_TKc"/>
    <property type="match status" value="1"/>
</dbReference>
<dbReference type="SUPFAM" id="SSF56112">
    <property type="entry name" value="Protein kinase-like (PK-like)"/>
    <property type="match status" value="1"/>
</dbReference>
<dbReference type="PROSITE" id="PS00107">
    <property type="entry name" value="PROTEIN_KINASE_ATP"/>
    <property type="match status" value="1"/>
</dbReference>
<dbReference type="PROSITE" id="PS50011">
    <property type="entry name" value="PROTEIN_KINASE_DOM"/>
    <property type="match status" value="1"/>
</dbReference>
<dbReference type="PROSITE" id="PS00108">
    <property type="entry name" value="PROTEIN_KINASE_ST"/>
    <property type="match status" value="1"/>
</dbReference>
<feature type="chain" id="PRO_0000383652" description="Serine/threonine-protein kinase par-4">
    <location>
        <begin position="1"/>
        <end position="649"/>
    </location>
</feature>
<feature type="domain" description="Protein kinase" evidence="5">
    <location>
        <begin position="197"/>
        <end position="460"/>
    </location>
</feature>
<feature type="region of interest" description="Disordered" evidence="7">
    <location>
        <begin position="1"/>
        <end position="132"/>
    </location>
</feature>
<feature type="region of interest" description="Disordered" evidence="7">
    <location>
        <begin position="548"/>
        <end position="649"/>
    </location>
</feature>
<feature type="compositionally biased region" description="Polar residues" evidence="7">
    <location>
        <begin position="1"/>
        <end position="11"/>
    </location>
</feature>
<feature type="compositionally biased region" description="Basic and acidic residues" evidence="7">
    <location>
        <begin position="45"/>
        <end position="55"/>
    </location>
</feature>
<feature type="compositionally biased region" description="Acidic residues" evidence="7">
    <location>
        <begin position="64"/>
        <end position="77"/>
    </location>
</feature>
<feature type="compositionally biased region" description="Acidic residues" evidence="7">
    <location>
        <begin position="117"/>
        <end position="129"/>
    </location>
</feature>
<feature type="compositionally biased region" description="Low complexity" evidence="7">
    <location>
        <begin position="597"/>
        <end position="609"/>
    </location>
</feature>
<feature type="active site" description="Proton acceptor" evidence="1 5 6">
    <location>
        <position position="324"/>
    </location>
</feature>
<feature type="binding site" evidence="1 5">
    <location>
        <begin position="203"/>
        <end position="211"/>
    </location>
    <ligand>
        <name>ATP</name>
        <dbReference type="ChEBI" id="CHEBI:30616"/>
    </ligand>
</feature>
<feature type="binding site" evidence="1 5">
    <location>
        <position position="226"/>
    </location>
    <ligand>
        <name>ATP</name>
        <dbReference type="ChEBI" id="CHEBI:30616"/>
    </ligand>
</feature>
<proteinExistence type="inferred from homology"/>
<name>PAR4_CAEBR</name>
<accession>A8X0C4</accession>
<comment type="function">
    <text evidence="3">Required for cytoplasmic partitioning and asymmetric cell division in early embryogenesis. Phosphorylates and restricts the asymmetry effectors mex-5 and mex-6 to the anterior cytoplasm of the zygote and maintains these phosphorylations until fertilization. Phosphorylates and regulates aak-2 in response to oxidative stress. May also play a role in motility, behavioral response, regulation of lifespan and dauer formation through this pathway (By similarity).</text>
</comment>
<comment type="catalytic activity">
    <reaction evidence="2">
        <text>L-seryl-[protein] + ATP = O-phospho-L-seryl-[protein] + ADP + H(+)</text>
        <dbReference type="Rhea" id="RHEA:17989"/>
        <dbReference type="Rhea" id="RHEA-COMP:9863"/>
        <dbReference type="Rhea" id="RHEA-COMP:11604"/>
        <dbReference type="ChEBI" id="CHEBI:15378"/>
        <dbReference type="ChEBI" id="CHEBI:29999"/>
        <dbReference type="ChEBI" id="CHEBI:30616"/>
        <dbReference type="ChEBI" id="CHEBI:83421"/>
        <dbReference type="ChEBI" id="CHEBI:456216"/>
        <dbReference type="EC" id="2.7.11.1"/>
    </reaction>
</comment>
<comment type="catalytic activity">
    <reaction evidence="2">
        <text>L-threonyl-[protein] + ATP = O-phospho-L-threonyl-[protein] + ADP + H(+)</text>
        <dbReference type="Rhea" id="RHEA:46608"/>
        <dbReference type="Rhea" id="RHEA-COMP:11060"/>
        <dbReference type="Rhea" id="RHEA-COMP:11605"/>
        <dbReference type="ChEBI" id="CHEBI:15378"/>
        <dbReference type="ChEBI" id="CHEBI:30013"/>
        <dbReference type="ChEBI" id="CHEBI:30616"/>
        <dbReference type="ChEBI" id="CHEBI:61977"/>
        <dbReference type="ChEBI" id="CHEBI:456216"/>
        <dbReference type="EC" id="2.7.11.1"/>
    </reaction>
</comment>
<comment type="cofactor">
    <cofactor evidence="2">
        <name>Mg(2+)</name>
        <dbReference type="ChEBI" id="CHEBI:18420"/>
    </cofactor>
    <cofactor evidence="2">
        <name>Mn(2+)</name>
        <dbReference type="ChEBI" id="CHEBI:29035"/>
    </cofactor>
</comment>
<comment type="subcellular location">
    <subcellularLocation>
        <location evidence="3">Cytoplasm</location>
        <location evidence="3">Cell cortex</location>
    </subcellularLocation>
</comment>
<comment type="similarity">
    <text evidence="4">Belongs to the protein kinase superfamily. CAMK Ser/Thr protein kinase family. LKB1 subfamily.</text>
</comment>
<keyword id="KW-0067">ATP-binding</keyword>
<keyword id="KW-0963">Cytoplasm</keyword>
<keyword id="KW-0217">Developmental protein</keyword>
<keyword id="KW-0418">Kinase</keyword>
<keyword id="KW-0460">Magnesium</keyword>
<keyword id="KW-0464">Manganese</keyword>
<keyword id="KW-0479">Metal-binding</keyword>
<keyword id="KW-0547">Nucleotide-binding</keyword>
<keyword id="KW-1185">Reference proteome</keyword>
<keyword id="KW-0723">Serine/threonine-protein kinase</keyword>
<keyword id="KW-0346">Stress response</keyword>
<keyword id="KW-0808">Transferase</keyword>
<evidence type="ECO:0000250" key="1">
    <source>
        <dbReference type="UniProtKB" id="P28523"/>
    </source>
</evidence>
<evidence type="ECO:0000250" key="2">
    <source>
        <dbReference type="UniProtKB" id="Q15831"/>
    </source>
</evidence>
<evidence type="ECO:0000250" key="3">
    <source>
        <dbReference type="UniProtKB" id="Q9GN62"/>
    </source>
</evidence>
<evidence type="ECO:0000255" key="4"/>
<evidence type="ECO:0000255" key="5">
    <source>
        <dbReference type="PROSITE-ProRule" id="PRU00159"/>
    </source>
</evidence>
<evidence type="ECO:0000255" key="6">
    <source>
        <dbReference type="PROSITE-ProRule" id="PRU10027"/>
    </source>
</evidence>
<evidence type="ECO:0000256" key="7">
    <source>
        <dbReference type="SAM" id="MobiDB-lite"/>
    </source>
</evidence>
<evidence type="ECO:0000312" key="8">
    <source>
        <dbReference type="EMBL" id="CAP26084.2"/>
    </source>
</evidence>
<organism>
    <name type="scientific">Caenorhabditis briggsae</name>
    <dbReference type="NCBI Taxonomy" id="6238"/>
    <lineage>
        <taxon>Eukaryota</taxon>
        <taxon>Metazoa</taxon>
        <taxon>Ecdysozoa</taxon>
        <taxon>Nematoda</taxon>
        <taxon>Chromadorea</taxon>
        <taxon>Rhabditida</taxon>
        <taxon>Rhabditina</taxon>
        <taxon>Rhabditomorpha</taxon>
        <taxon>Rhabditoidea</taxon>
        <taxon>Rhabditidae</taxon>
        <taxon>Peloderinae</taxon>
        <taxon>Caenorhabditis</taxon>
    </lineage>
</organism>
<protein>
    <recommendedName>
        <fullName evidence="2 8">Serine/threonine-protein kinase par-4</fullName>
        <ecNumber>2.7.11.1</ecNumber>
    </recommendedName>
</protein>
<reference evidence="8" key="1">
    <citation type="journal article" date="2003" name="PLoS Biol.">
        <title>The genome sequence of Caenorhabditis briggsae: a platform for comparative genomics.</title>
        <authorList>
            <person name="Stein L.D."/>
            <person name="Bao Z."/>
            <person name="Blasiar D."/>
            <person name="Blumenthal T."/>
            <person name="Brent M.R."/>
            <person name="Chen N."/>
            <person name="Chinwalla A."/>
            <person name="Clarke L."/>
            <person name="Clee C."/>
            <person name="Coghlan A."/>
            <person name="Coulson A."/>
            <person name="D'Eustachio P."/>
            <person name="Fitch D.H.A."/>
            <person name="Fulton L.A."/>
            <person name="Fulton R.E."/>
            <person name="Griffiths-Jones S."/>
            <person name="Harris T.W."/>
            <person name="Hillier L.W."/>
            <person name="Kamath R."/>
            <person name="Kuwabara P.E."/>
            <person name="Mardis E.R."/>
            <person name="Marra M.A."/>
            <person name="Miner T.L."/>
            <person name="Minx P."/>
            <person name="Mullikin J.C."/>
            <person name="Plumb R.W."/>
            <person name="Rogers J."/>
            <person name="Schein J.E."/>
            <person name="Sohrmann M."/>
            <person name="Spieth J."/>
            <person name="Stajich J.E."/>
            <person name="Wei C."/>
            <person name="Willey D."/>
            <person name="Wilson R.K."/>
            <person name="Durbin R.M."/>
            <person name="Waterston R.H."/>
        </authorList>
    </citation>
    <scope>NUCLEOTIDE SEQUENCE [LARGE SCALE GENOMIC DNA]</scope>
    <source>
        <strain evidence="8">AF16</strain>
    </source>
</reference>